<evidence type="ECO:0000250" key="1">
    <source>
        <dbReference type="UniProtKB" id="P35732"/>
    </source>
</evidence>
<evidence type="ECO:0000255" key="2">
    <source>
        <dbReference type="PROSITE-ProRule" id="PRU00468"/>
    </source>
</evidence>
<evidence type="ECO:0000256" key="3">
    <source>
        <dbReference type="SAM" id="MobiDB-lite"/>
    </source>
</evidence>
<evidence type="ECO:0000305" key="4"/>
<name>DEF1_YEAS2</name>
<reference key="1">
    <citation type="journal article" date="2009" name="Genome Res.">
        <title>Genome structure of a Saccharomyces cerevisiae strain widely used in bioethanol production.</title>
        <authorList>
            <person name="Argueso J.L."/>
            <person name="Carazzolle M.F."/>
            <person name="Mieczkowski P.A."/>
            <person name="Duarte F.M."/>
            <person name="Netto O.V.C."/>
            <person name="Missawa S.K."/>
            <person name="Galzerani F."/>
            <person name="Costa G.G.L."/>
            <person name="Vidal R.O."/>
            <person name="Noronha M.F."/>
            <person name="Dominska M."/>
            <person name="Andrietta M.G.S."/>
            <person name="Andrietta S.R."/>
            <person name="Cunha A.F."/>
            <person name="Gomes L.H."/>
            <person name="Tavares F.C.A."/>
            <person name="Alcarde A.R."/>
            <person name="Dietrich F.S."/>
            <person name="McCusker J.H."/>
            <person name="Petes T.D."/>
            <person name="Pereira G.A.G."/>
        </authorList>
    </citation>
    <scope>NUCLEOTIDE SEQUENCE [LARGE SCALE GENOMIC DNA]</scope>
    <source>
        <strain>JAY291</strain>
    </source>
</reference>
<comment type="function">
    <text evidence="1">Recruits the ubiquitination machinery to RNA polymerase II for polyubiquitination, removal and degradation, when the transcription-coupled repair (TCR) factor RAD26 fails to efficiently displace stalled RNA polymerase II. Also involved in telomere length regulation. Binds DNA.</text>
</comment>
<comment type="subunit">
    <text evidence="1">Homodimer; may form higher order oligomers. Interacts with the large RNA polymerase II subunit RPO21; the interaction is direct and serves to bridge RPO21 to the Elongin complex in a manner dependent on transcription stress. Interacts with RAD26.</text>
</comment>
<comment type="subcellular location">
    <subcellularLocation>
        <location evidence="1">Cytoplasm</location>
    </subcellularLocation>
    <subcellularLocation>
        <location evidence="1">Nucleus</location>
    </subcellularLocation>
    <subcellularLocation>
        <location evidence="1">Chromosome</location>
        <location evidence="1">Telomere</location>
    </subcellularLocation>
    <text evidence="1">During transcription stress, localizes to the nucleus following proteolytic cleavage by the proteasome.</text>
</comment>
<comment type="PTM">
    <text evidence="1">Ubiquitinated.</text>
</comment>
<comment type="PTM">
    <text evidence="1">Proteolytically cleaved by the proteasome in response to transcription stress; the resulting N-terminal form constitutes the activated nuclear form and the C-terminal portion is degraded.</text>
</comment>
<comment type="similarity">
    <text evidence="4">Belongs to the DEF1 family.</text>
</comment>
<feature type="chain" id="PRO_0000405671" description="RNA polymerase II degradation factor 1">
    <location>
        <begin position="1"/>
        <end position="738"/>
    </location>
</feature>
<feature type="domain" description="CUE" evidence="2">
    <location>
        <begin position="21"/>
        <end position="63"/>
    </location>
</feature>
<feature type="region of interest" description="Disordered" evidence="3">
    <location>
        <begin position="69"/>
        <end position="455"/>
    </location>
</feature>
<feature type="region of interest" description="Disordered" evidence="3">
    <location>
        <begin position="467"/>
        <end position="503"/>
    </location>
</feature>
<feature type="region of interest" description="Contains the proteolytic activation cleavage site" evidence="1">
    <location>
        <begin position="500"/>
        <end position="530"/>
    </location>
</feature>
<feature type="region of interest" description="Disordered" evidence="3">
    <location>
        <begin position="640"/>
        <end position="688"/>
    </location>
</feature>
<feature type="compositionally biased region" description="Basic and acidic residues" evidence="3">
    <location>
        <begin position="69"/>
        <end position="84"/>
    </location>
</feature>
<feature type="compositionally biased region" description="Low complexity" evidence="3">
    <location>
        <begin position="103"/>
        <end position="121"/>
    </location>
</feature>
<feature type="compositionally biased region" description="Basic and acidic residues" evidence="3">
    <location>
        <begin position="211"/>
        <end position="220"/>
    </location>
</feature>
<feature type="compositionally biased region" description="Low complexity" evidence="3">
    <location>
        <begin position="224"/>
        <end position="237"/>
    </location>
</feature>
<feature type="compositionally biased region" description="Basic and acidic residues" evidence="3">
    <location>
        <begin position="256"/>
        <end position="291"/>
    </location>
</feature>
<feature type="compositionally biased region" description="Acidic residues" evidence="3">
    <location>
        <begin position="298"/>
        <end position="328"/>
    </location>
</feature>
<feature type="compositionally biased region" description="Acidic residues" evidence="3">
    <location>
        <begin position="337"/>
        <end position="358"/>
    </location>
</feature>
<feature type="compositionally biased region" description="Low complexity" evidence="3">
    <location>
        <begin position="380"/>
        <end position="455"/>
    </location>
</feature>
<feature type="compositionally biased region" description="Low complexity" evidence="3">
    <location>
        <begin position="467"/>
        <end position="498"/>
    </location>
</feature>
<feature type="compositionally biased region" description="Low complexity" evidence="3">
    <location>
        <begin position="660"/>
        <end position="688"/>
    </location>
</feature>
<feature type="modified residue" description="Phosphoserine" evidence="1">
    <location>
        <position position="260"/>
    </location>
</feature>
<feature type="modified residue" description="Phosphoserine" evidence="1">
    <location>
        <position position="273"/>
    </location>
</feature>
<feature type="modified residue" description="Phosphoserine" evidence="1">
    <location>
        <position position="307"/>
    </location>
</feature>
<feature type="modified residue" description="Phosphothreonine" evidence="1">
    <location>
        <position position="338"/>
    </location>
</feature>
<feature type="modified residue" description="Phosphoserine" evidence="1">
    <location>
        <position position="646"/>
    </location>
</feature>
<proteinExistence type="inferred from homology"/>
<protein>
    <recommendedName>
        <fullName>RNA polymerase II degradation factor 1</fullName>
    </recommendedName>
    <alternativeName>
        <fullName>RRM3-interacting protein 1</fullName>
    </alternativeName>
</protein>
<keyword id="KW-0158">Chromosome</keyword>
<keyword id="KW-0963">Cytoplasm</keyword>
<keyword id="KW-0227">DNA damage</keyword>
<keyword id="KW-0234">DNA repair</keyword>
<keyword id="KW-0238">DNA-binding</keyword>
<keyword id="KW-0539">Nucleus</keyword>
<keyword id="KW-0597">Phosphoprotein</keyword>
<keyword id="KW-0779">Telomere</keyword>
<keyword id="KW-0832">Ubl conjugation</keyword>
<keyword id="KW-0833">Ubl conjugation pathway</keyword>
<sequence>MSTQFRKSNHNSHSSKKLNPALKSKIDTLTELFPDWTSDDLIDIVQEYDDLETIIDKITSGAVTRWDEVKKPAKKEKYEKKEQQHSYVPQQHLPNPEDDITYKSSNNSNSFTSTKHNSSNNYTQARNKKKVQTPRAHTTGKHVNLDKGKHVPSKPVSNTTSWAAAVSVDTKHDVPQDSNDNNNEELEAQGQQAQEKNQEKEQEEQQQQEGHNNKEEHKQIEQPSLSSKKTTSRTSASQPKKMSWAAIATPKPKAVKKTESPLENVAELKKEISDIKKDDQKSEASEEKVNEQETSAQEQEEETAEPSEENEDRVPEVDGEEVQEEAEEKEQVKEEEQTAEELEQEQDNVAAPEEEVTVVEEKVEISAVISEPPEDQANTVPQPQQQSQQPQQPQQPQQPQQPQQPQQQQQPQQPQQPQQQLQQQQQQQQQPVQAQAQAQEEQLSQNYYTQQQQQQYAQQQHQLQQQYLSQQQQYAQQQQQHPQPQSQQPQSQQSPQSQKQGNNVAAQQYYMYQNQFPGYSYPGMFDSQGYAYGQQYQQLAQNNAQTSGNANQYNFQQGYGQAGANTAAANLTSAAAAAAASPATAHAQPQQQQPYGGSFMPYYAHFYQQSFPYGQPQYGVAGQYPYQLPKNNYNYYQTQNGQEQQSPNQGVAQHSEDSQQKQSQQQQQQQPQGQPQPEVQMQNGQPVNPQQQMQFQQYYQFQQQQQQAAAAAAAAAQQGVPYGYNGYDYNSKNSRGFY</sequence>
<dbReference type="EMBL" id="ACFL01000080">
    <property type="protein sequence ID" value="EEU07462.1"/>
    <property type="molecule type" value="Genomic_DNA"/>
</dbReference>
<dbReference type="SMR" id="C7GP20"/>
<dbReference type="Proteomes" id="UP000008073">
    <property type="component" value="Unassembled WGS sequence"/>
</dbReference>
<dbReference type="GO" id="GO:0000781">
    <property type="term" value="C:chromosome, telomeric region"/>
    <property type="evidence" value="ECO:0007669"/>
    <property type="project" value="UniProtKB-SubCell"/>
</dbReference>
<dbReference type="GO" id="GO:0005737">
    <property type="term" value="C:cytoplasm"/>
    <property type="evidence" value="ECO:0007669"/>
    <property type="project" value="UniProtKB-SubCell"/>
</dbReference>
<dbReference type="GO" id="GO:0005634">
    <property type="term" value="C:nucleus"/>
    <property type="evidence" value="ECO:0007669"/>
    <property type="project" value="UniProtKB-SubCell"/>
</dbReference>
<dbReference type="GO" id="GO:0003677">
    <property type="term" value="F:DNA binding"/>
    <property type="evidence" value="ECO:0007669"/>
    <property type="project" value="UniProtKB-KW"/>
</dbReference>
<dbReference type="GO" id="GO:0043130">
    <property type="term" value="F:ubiquitin binding"/>
    <property type="evidence" value="ECO:0007669"/>
    <property type="project" value="InterPro"/>
</dbReference>
<dbReference type="GO" id="GO:0006281">
    <property type="term" value="P:DNA repair"/>
    <property type="evidence" value="ECO:0007669"/>
    <property type="project" value="UniProtKB-KW"/>
</dbReference>
<dbReference type="CDD" id="cd14368">
    <property type="entry name" value="CUE_DEF1_like"/>
    <property type="match status" value="1"/>
</dbReference>
<dbReference type="InterPro" id="IPR003892">
    <property type="entry name" value="CUE"/>
</dbReference>
<dbReference type="InterPro" id="IPR041803">
    <property type="entry name" value="DEF1_CUE"/>
</dbReference>
<dbReference type="PROSITE" id="PS51140">
    <property type="entry name" value="CUE"/>
    <property type="match status" value="1"/>
</dbReference>
<gene>
    <name type="primary">DEF1</name>
    <name type="synonym">RIP1</name>
    <name type="synonym">VID31</name>
    <name type="ORF">C1Q_02051</name>
</gene>
<accession>C7GP20</accession>
<organism>
    <name type="scientific">Saccharomyces cerevisiae (strain JAY291)</name>
    <name type="common">Baker's yeast</name>
    <dbReference type="NCBI Taxonomy" id="574961"/>
    <lineage>
        <taxon>Eukaryota</taxon>
        <taxon>Fungi</taxon>
        <taxon>Dikarya</taxon>
        <taxon>Ascomycota</taxon>
        <taxon>Saccharomycotina</taxon>
        <taxon>Saccharomycetes</taxon>
        <taxon>Saccharomycetales</taxon>
        <taxon>Saccharomycetaceae</taxon>
        <taxon>Saccharomyces</taxon>
    </lineage>
</organism>